<comment type="function">
    <text evidence="1">Involved in protein export. Acts as a chaperone by maintaining the newly synthesized protein in an open conformation. Functions as a peptidyl-prolyl cis-trans isomerase.</text>
</comment>
<comment type="catalytic activity">
    <reaction evidence="1">
        <text>[protein]-peptidylproline (omega=180) = [protein]-peptidylproline (omega=0)</text>
        <dbReference type="Rhea" id="RHEA:16237"/>
        <dbReference type="Rhea" id="RHEA-COMP:10747"/>
        <dbReference type="Rhea" id="RHEA-COMP:10748"/>
        <dbReference type="ChEBI" id="CHEBI:83833"/>
        <dbReference type="ChEBI" id="CHEBI:83834"/>
        <dbReference type="EC" id="5.2.1.8"/>
    </reaction>
</comment>
<comment type="subcellular location">
    <subcellularLocation>
        <location>Cytoplasm</location>
    </subcellularLocation>
    <text evidence="1">About half TF is bound to the ribosome near the polypeptide exit tunnel while the other half is free in the cytoplasm.</text>
</comment>
<comment type="domain">
    <text evidence="1">Consists of 3 domains; the N-terminus binds the ribosome, the middle domain has PPIase activity, while the C-terminus has intrinsic chaperone activity on its own.</text>
</comment>
<comment type="similarity">
    <text evidence="1">Belongs to the FKBP-type PPIase family. Tig subfamily.</text>
</comment>
<feature type="chain" id="PRO_1000022733" description="Trigger factor">
    <location>
        <begin position="1"/>
        <end position="436"/>
    </location>
</feature>
<feature type="domain" description="PPIase FKBP-type" evidence="1">
    <location>
        <begin position="161"/>
        <end position="246"/>
    </location>
</feature>
<reference key="1">
    <citation type="journal article" date="2006" name="Genome Biol.">
        <title>Genomic analysis reveals that Pseudomonas aeruginosa virulence is combinatorial.</title>
        <authorList>
            <person name="Lee D.G."/>
            <person name="Urbach J.M."/>
            <person name="Wu G."/>
            <person name="Liberati N.T."/>
            <person name="Feinbaum R.L."/>
            <person name="Miyata S."/>
            <person name="Diggins L.T."/>
            <person name="He J."/>
            <person name="Saucier M."/>
            <person name="Deziel E."/>
            <person name="Friedman L."/>
            <person name="Li L."/>
            <person name="Grills G."/>
            <person name="Montgomery K."/>
            <person name="Kucherlapati R."/>
            <person name="Rahme L.G."/>
            <person name="Ausubel F.M."/>
        </authorList>
    </citation>
    <scope>NUCLEOTIDE SEQUENCE [LARGE SCALE GENOMIC DNA]</scope>
    <source>
        <strain>UCBPP-PA14</strain>
    </source>
</reference>
<dbReference type="EC" id="5.2.1.8" evidence="1"/>
<dbReference type="EMBL" id="CP000438">
    <property type="protein sequence ID" value="ABJ10986.1"/>
    <property type="molecule type" value="Genomic_DNA"/>
</dbReference>
<dbReference type="RefSeq" id="WP_003087920.1">
    <property type="nucleotide sequence ID" value="NZ_CP034244.1"/>
</dbReference>
<dbReference type="SMR" id="Q02KU3"/>
<dbReference type="KEGG" id="pau:PA14_41250"/>
<dbReference type="PseudoCAP" id="PA14_41250"/>
<dbReference type="HOGENOM" id="CLU_033058_2_0_6"/>
<dbReference type="BioCyc" id="PAER208963:G1G74-3454-MONOMER"/>
<dbReference type="Proteomes" id="UP000000653">
    <property type="component" value="Chromosome"/>
</dbReference>
<dbReference type="GO" id="GO:0005737">
    <property type="term" value="C:cytoplasm"/>
    <property type="evidence" value="ECO:0007669"/>
    <property type="project" value="UniProtKB-SubCell"/>
</dbReference>
<dbReference type="GO" id="GO:0003755">
    <property type="term" value="F:peptidyl-prolyl cis-trans isomerase activity"/>
    <property type="evidence" value="ECO:0007669"/>
    <property type="project" value="UniProtKB-UniRule"/>
</dbReference>
<dbReference type="GO" id="GO:0044183">
    <property type="term" value="F:protein folding chaperone"/>
    <property type="evidence" value="ECO:0007669"/>
    <property type="project" value="TreeGrafter"/>
</dbReference>
<dbReference type="GO" id="GO:0043022">
    <property type="term" value="F:ribosome binding"/>
    <property type="evidence" value="ECO:0007669"/>
    <property type="project" value="TreeGrafter"/>
</dbReference>
<dbReference type="GO" id="GO:0051083">
    <property type="term" value="P:'de novo' cotranslational protein folding"/>
    <property type="evidence" value="ECO:0007669"/>
    <property type="project" value="TreeGrafter"/>
</dbReference>
<dbReference type="GO" id="GO:0051301">
    <property type="term" value="P:cell division"/>
    <property type="evidence" value="ECO:0007669"/>
    <property type="project" value="UniProtKB-KW"/>
</dbReference>
<dbReference type="GO" id="GO:0061077">
    <property type="term" value="P:chaperone-mediated protein folding"/>
    <property type="evidence" value="ECO:0007669"/>
    <property type="project" value="TreeGrafter"/>
</dbReference>
<dbReference type="GO" id="GO:0015031">
    <property type="term" value="P:protein transport"/>
    <property type="evidence" value="ECO:0007669"/>
    <property type="project" value="UniProtKB-UniRule"/>
</dbReference>
<dbReference type="GO" id="GO:0043335">
    <property type="term" value="P:protein unfolding"/>
    <property type="evidence" value="ECO:0007669"/>
    <property type="project" value="TreeGrafter"/>
</dbReference>
<dbReference type="FunFam" id="3.10.50.40:FF:000001">
    <property type="entry name" value="Trigger factor"/>
    <property type="match status" value="1"/>
</dbReference>
<dbReference type="FunFam" id="3.30.70.1050:FF:000001">
    <property type="entry name" value="Trigger factor"/>
    <property type="match status" value="1"/>
</dbReference>
<dbReference type="Gene3D" id="3.10.50.40">
    <property type="match status" value="1"/>
</dbReference>
<dbReference type="Gene3D" id="3.30.70.1050">
    <property type="entry name" value="Trigger factor ribosome-binding domain"/>
    <property type="match status" value="1"/>
</dbReference>
<dbReference type="Gene3D" id="1.10.3120.10">
    <property type="entry name" value="Trigger factor, C-terminal domain"/>
    <property type="match status" value="1"/>
</dbReference>
<dbReference type="HAMAP" id="MF_00303">
    <property type="entry name" value="Trigger_factor_Tig"/>
    <property type="match status" value="1"/>
</dbReference>
<dbReference type="InterPro" id="IPR046357">
    <property type="entry name" value="PPIase_dom_sf"/>
</dbReference>
<dbReference type="InterPro" id="IPR001179">
    <property type="entry name" value="PPIase_FKBP_dom"/>
</dbReference>
<dbReference type="InterPro" id="IPR005215">
    <property type="entry name" value="Trig_fac"/>
</dbReference>
<dbReference type="InterPro" id="IPR008880">
    <property type="entry name" value="Trigger_fac_C"/>
</dbReference>
<dbReference type="InterPro" id="IPR037041">
    <property type="entry name" value="Trigger_fac_C_sf"/>
</dbReference>
<dbReference type="InterPro" id="IPR008881">
    <property type="entry name" value="Trigger_fac_ribosome-bd_bac"/>
</dbReference>
<dbReference type="InterPro" id="IPR036611">
    <property type="entry name" value="Trigger_fac_ribosome-bd_sf"/>
</dbReference>
<dbReference type="InterPro" id="IPR027304">
    <property type="entry name" value="Trigger_fact/SurA_dom_sf"/>
</dbReference>
<dbReference type="NCBIfam" id="TIGR00115">
    <property type="entry name" value="tig"/>
    <property type="match status" value="1"/>
</dbReference>
<dbReference type="PANTHER" id="PTHR30560">
    <property type="entry name" value="TRIGGER FACTOR CHAPERONE AND PEPTIDYL-PROLYL CIS/TRANS ISOMERASE"/>
    <property type="match status" value="1"/>
</dbReference>
<dbReference type="PANTHER" id="PTHR30560:SF3">
    <property type="entry name" value="TRIGGER FACTOR-LIKE PROTEIN TIG, CHLOROPLASTIC"/>
    <property type="match status" value="1"/>
</dbReference>
<dbReference type="Pfam" id="PF00254">
    <property type="entry name" value="FKBP_C"/>
    <property type="match status" value="1"/>
</dbReference>
<dbReference type="Pfam" id="PF05698">
    <property type="entry name" value="Trigger_C"/>
    <property type="match status" value="1"/>
</dbReference>
<dbReference type="Pfam" id="PF05697">
    <property type="entry name" value="Trigger_N"/>
    <property type="match status" value="1"/>
</dbReference>
<dbReference type="PIRSF" id="PIRSF003095">
    <property type="entry name" value="Trigger_factor"/>
    <property type="match status" value="1"/>
</dbReference>
<dbReference type="SUPFAM" id="SSF54534">
    <property type="entry name" value="FKBP-like"/>
    <property type="match status" value="1"/>
</dbReference>
<dbReference type="SUPFAM" id="SSF109998">
    <property type="entry name" value="Triger factor/SurA peptide-binding domain-like"/>
    <property type="match status" value="1"/>
</dbReference>
<dbReference type="SUPFAM" id="SSF102735">
    <property type="entry name" value="Trigger factor ribosome-binding domain"/>
    <property type="match status" value="1"/>
</dbReference>
<dbReference type="PROSITE" id="PS50059">
    <property type="entry name" value="FKBP_PPIASE"/>
    <property type="match status" value="1"/>
</dbReference>
<proteinExistence type="inferred from homology"/>
<keyword id="KW-0131">Cell cycle</keyword>
<keyword id="KW-0132">Cell division</keyword>
<keyword id="KW-0143">Chaperone</keyword>
<keyword id="KW-0963">Cytoplasm</keyword>
<keyword id="KW-0413">Isomerase</keyword>
<keyword id="KW-0697">Rotamase</keyword>
<evidence type="ECO:0000255" key="1">
    <source>
        <dbReference type="HAMAP-Rule" id="MF_00303"/>
    </source>
</evidence>
<name>TIG_PSEAB</name>
<sequence>MQVSVESTSALERRMTVGVPAERIETEVNKRLQQTARRAKIPGFRPGKVPMSVIRQRYEASARQEAMGDLIQETFYEAVVEQKLNPAGSPSVEPKSFEKGKDLEYIATFEVFPEFTVSGLEDIKVERLQAEVSDADVDNMLDVLRKQNTRFEVVERAAQNDDQLNIDFVGKIDGEAFAGGSAKGTLLVLGSGRMIAGFEEGLVGAKAGEERVLNLTFPEDYQNLDLANKAAEFTVTVNSVAEPKLPELNEEFFALFGVKETGLDGFRAEVQKNMERELRQAIKSKVKNQVMEGLLQANPIEVPKALIGNEVNRLRVQAVQQFGGNIKPDQLPAELFEEQAKRRVVLGLIVAEVVKQHELKADEGRVREMIEEMASAYQEPEQVVAWYFKNEPQLNEVRSVVLEEQVVDTVLQKATVTDKQVSYEEAVKPAEAPQAA</sequence>
<organism>
    <name type="scientific">Pseudomonas aeruginosa (strain UCBPP-PA14)</name>
    <dbReference type="NCBI Taxonomy" id="208963"/>
    <lineage>
        <taxon>Bacteria</taxon>
        <taxon>Pseudomonadati</taxon>
        <taxon>Pseudomonadota</taxon>
        <taxon>Gammaproteobacteria</taxon>
        <taxon>Pseudomonadales</taxon>
        <taxon>Pseudomonadaceae</taxon>
        <taxon>Pseudomonas</taxon>
    </lineage>
</organism>
<protein>
    <recommendedName>
        <fullName evidence="1">Trigger factor</fullName>
        <shortName evidence="1">TF</shortName>
        <ecNumber evidence="1">5.2.1.8</ecNumber>
    </recommendedName>
    <alternativeName>
        <fullName evidence="1">PPIase</fullName>
    </alternativeName>
</protein>
<accession>Q02KU3</accession>
<gene>
    <name evidence="1" type="primary">tig</name>
    <name type="ordered locus">PA14_41250</name>
</gene>